<organism>
    <name type="scientific">Xylella fastidiosa (strain Temecula1 / ATCC 700964)</name>
    <dbReference type="NCBI Taxonomy" id="183190"/>
    <lineage>
        <taxon>Bacteria</taxon>
        <taxon>Pseudomonadati</taxon>
        <taxon>Pseudomonadota</taxon>
        <taxon>Gammaproteobacteria</taxon>
        <taxon>Lysobacterales</taxon>
        <taxon>Lysobacteraceae</taxon>
        <taxon>Xylella</taxon>
    </lineage>
</organism>
<gene>
    <name evidence="1" type="primary">apaH</name>
    <name type="ordered locus">PD_1210</name>
</gene>
<sequence>MSIWAIGDLQGCYDATQRLLENIRFDPSQDTLWFCGDLVNRGGQSLETLRLVHSLRSHSVVVLGNHDLSLLAVTVRSEEEQRKVNPDLLRIITAEDRDEILTWLRMQKLIHVDRTIGWMMVHAGLAPKWTTQMAEKLAHEVEQQLHGTDYRKLLHSMYGDKPEWSPALSGCNRSRAIINVLTRMRYCTPRGRISTEDKGTPGTQTQGMYPWFEVPGRVERDLKIVCGHWSTLGLTITQGIHAIDTGAVWGGKLTALQIDTDELRLAQVHGLSIEHPRHTHTPRRKAKKRHKRSPK</sequence>
<protein>
    <recommendedName>
        <fullName evidence="1">Bis(5'-nucleosyl)-tetraphosphatase, symmetrical</fullName>
        <ecNumber evidence="1">3.6.1.41</ecNumber>
    </recommendedName>
    <alternativeName>
        <fullName evidence="1">Ap4A hydrolase</fullName>
    </alternativeName>
    <alternativeName>
        <fullName evidence="1">Diadenosine 5',5'''-P1,P4-tetraphosphate pyrophosphohydrolase</fullName>
    </alternativeName>
    <alternativeName>
        <fullName evidence="1">Diadenosine tetraphosphatase</fullName>
    </alternativeName>
</protein>
<reference key="1">
    <citation type="journal article" date="2003" name="J. Bacteriol.">
        <title>Comparative analyses of the complete genome sequences of Pierce's disease and citrus variegated chlorosis strains of Xylella fastidiosa.</title>
        <authorList>
            <person name="Van Sluys M.A."/>
            <person name="de Oliveira M.C."/>
            <person name="Monteiro-Vitorello C.B."/>
            <person name="Miyaki C.Y."/>
            <person name="Furlan L.R."/>
            <person name="Camargo L.E.A."/>
            <person name="da Silva A.C.R."/>
            <person name="Moon D.H."/>
            <person name="Takita M.A."/>
            <person name="Lemos E.G.M."/>
            <person name="Machado M.A."/>
            <person name="Ferro M.I.T."/>
            <person name="da Silva F.R."/>
            <person name="Goldman M.H.S."/>
            <person name="Goldman G.H."/>
            <person name="Lemos M.V.F."/>
            <person name="El-Dorry H."/>
            <person name="Tsai S.M."/>
            <person name="Carrer H."/>
            <person name="Carraro D.M."/>
            <person name="de Oliveira R.C."/>
            <person name="Nunes L.R."/>
            <person name="Siqueira W.J."/>
            <person name="Coutinho L.L."/>
            <person name="Kimura E.T."/>
            <person name="Ferro E.S."/>
            <person name="Harakava R."/>
            <person name="Kuramae E.E."/>
            <person name="Marino C.L."/>
            <person name="Giglioti E."/>
            <person name="Abreu I.L."/>
            <person name="Alves L.M.C."/>
            <person name="do Amaral A.M."/>
            <person name="Baia G.S."/>
            <person name="Blanco S.R."/>
            <person name="Brito M.S."/>
            <person name="Cannavan F.S."/>
            <person name="Celestino A.V."/>
            <person name="da Cunha A.F."/>
            <person name="Fenille R.C."/>
            <person name="Ferro J.A."/>
            <person name="Formighieri E.F."/>
            <person name="Kishi L.T."/>
            <person name="Leoni S.G."/>
            <person name="Oliveira A.R."/>
            <person name="Rosa V.E. Jr."/>
            <person name="Sassaki F.T."/>
            <person name="Sena J.A.D."/>
            <person name="de Souza A.A."/>
            <person name="Truffi D."/>
            <person name="Tsukumo F."/>
            <person name="Yanai G.M."/>
            <person name="Zaros L.G."/>
            <person name="Civerolo E.L."/>
            <person name="Simpson A.J.G."/>
            <person name="Almeida N.F. Jr."/>
            <person name="Setubal J.C."/>
            <person name="Kitajima J.P."/>
        </authorList>
    </citation>
    <scope>NUCLEOTIDE SEQUENCE [LARGE SCALE GENOMIC DNA]</scope>
    <source>
        <strain>Temecula1 / ATCC 700964</strain>
    </source>
</reference>
<feature type="chain" id="PRO_0000198020" description="Bis(5'-nucleosyl)-tetraphosphatase, symmetrical">
    <location>
        <begin position="1"/>
        <end position="295"/>
    </location>
</feature>
<feature type="region of interest" description="Disordered" evidence="2">
    <location>
        <begin position="271"/>
        <end position="295"/>
    </location>
</feature>
<feature type="compositionally biased region" description="Basic residues" evidence="2">
    <location>
        <begin position="277"/>
        <end position="295"/>
    </location>
</feature>
<accession>Q87C83</accession>
<name>APAH_XYLFT</name>
<comment type="function">
    <text evidence="1">Hydrolyzes diadenosine 5',5'''-P1,P4-tetraphosphate to yield ADP.</text>
</comment>
<comment type="catalytic activity">
    <reaction evidence="1">
        <text>P(1),P(4)-bis(5'-adenosyl) tetraphosphate + H2O = 2 ADP + 2 H(+)</text>
        <dbReference type="Rhea" id="RHEA:24252"/>
        <dbReference type="ChEBI" id="CHEBI:15377"/>
        <dbReference type="ChEBI" id="CHEBI:15378"/>
        <dbReference type="ChEBI" id="CHEBI:58141"/>
        <dbReference type="ChEBI" id="CHEBI:456216"/>
        <dbReference type="EC" id="3.6.1.41"/>
    </reaction>
</comment>
<comment type="similarity">
    <text evidence="1">Belongs to the Ap4A hydrolase family.</text>
</comment>
<evidence type="ECO:0000255" key="1">
    <source>
        <dbReference type="HAMAP-Rule" id="MF_00199"/>
    </source>
</evidence>
<evidence type="ECO:0000256" key="2">
    <source>
        <dbReference type="SAM" id="MobiDB-lite"/>
    </source>
</evidence>
<dbReference type="EC" id="3.6.1.41" evidence="1"/>
<dbReference type="EMBL" id="AE009442">
    <property type="protein sequence ID" value="AAO29061.1"/>
    <property type="molecule type" value="Genomic_DNA"/>
</dbReference>
<dbReference type="RefSeq" id="WP_011098001.1">
    <property type="nucleotide sequence ID" value="NC_004556.1"/>
</dbReference>
<dbReference type="SMR" id="Q87C83"/>
<dbReference type="KEGG" id="xft:PD_1210"/>
<dbReference type="HOGENOM" id="CLU_056184_0_0_6"/>
<dbReference type="Proteomes" id="UP000002516">
    <property type="component" value="Chromosome"/>
</dbReference>
<dbReference type="GO" id="GO:0008803">
    <property type="term" value="F:bis(5'-nucleosyl)-tetraphosphatase (symmetrical) activity"/>
    <property type="evidence" value="ECO:0007669"/>
    <property type="project" value="UniProtKB-UniRule"/>
</dbReference>
<dbReference type="CDD" id="cd07422">
    <property type="entry name" value="MPP_ApaH"/>
    <property type="match status" value="1"/>
</dbReference>
<dbReference type="Gene3D" id="3.60.21.10">
    <property type="match status" value="1"/>
</dbReference>
<dbReference type="HAMAP" id="MF_00199">
    <property type="entry name" value="ApaH"/>
    <property type="match status" value="1"/>
</dbReference>
<dbReference type="InterPro" id="IPR004617">
    <property type="entry name" value="ApaH"/>
</dbReference>
<dbReference type="InterPro" id="IPR004843">
    <property type="entry name" value="Calcineurin-like_PHP_ApaH"/>
</dbReference>
<dbReference type="InterPro" id="IPR029052">
    <property type="entry name" value="Metallo-depent_PP-like"/>
</dbReference>
<dbReference type="NCBIfam" id="TIGR00668">
    <property type="entry name" value="apaH"/>
    <property type="match status" value="1"/>
</dbReference>
<dbReference type="NCBIfam" id="NF001204">
    <property type="entry name" value="PRK00166.1"/>
    <property type="match status" value="1"/>
</dbReference>
<dbReference type="PANTHER" id="PTHR40942">
    <property type="match status" value="1"/>
</dbReference>
<dbReference type="PANTHER" id="PTHR40942:SF4">
    <property type="entry name" value="CYTOCHROME C5"/>
    <property type="match status" value="1"/>
</dbReference>
<dbReference type="Pfam" id="PF00149">
    <property type="entry name" value="Metallophos"/>
    <property type="match status" value="1"/>
</dbReference>
<dbReference type="PIRSF" id="PIRSF000903">
    <property type="entry name" value="B5n-ttraPtase_sm"/>
    <property type="match status" value="1"/>
</dbReference>
<dbReference type="SUPFAM" id="SSF56300">
    <property type="entry name" value="Metallo-dependent phosphatases"/>
    <property type="match status" value="1"/>
</dbReference>
<keyword id="KW-0378">Hydrolase</keyword>
<keyword id="KW-1185">Reference proteome</keyword>
<proteinExistence type="inferred from homology"/>